<proteinExistence type="evidence at protein level"/>
<keyword id="KW-0438">Lignin biosynthesis</keyword>
<keyword id="KW-0460">Magnesium</keyword>
<keyword id="KW-0479">Metal-binding</keyword>
<keyword id="KW-0489">Methyltransferase</keyword>
<keyword id="KW-1185">Reference proteome</keyword>
<keyword id="KW-0949">S-adenosyl-L-methionine</keyword>
<keyword id="KW-0808">Transferase</keyword>
<organism>
    <name type="scientific">Nicotiana tabacum</name>
    <name type="common">Common tobacco</name>
    <dbReference type="NCBI Taxonomy" id="4097"/>
    <lineage>
        <taxon>Eukaryota</taxon>
        <taxon>Viridiplantae</taxon>
        <taxon>Streptophyta</taxon>
        <taxon>Embryophyta</taxon>
        <taxon>Tracheophyta</taxon>
        <taxon>Spermatophyta</taxon>
        <taxon>Magnoliopsida</taxon>
        <taxon>eudicotyledons</taxon>
        <taxon>Gunneridae</taxon>
        <taxon>Pentapetalae</taxon>
        <taxon>asterids</taxon>
        <taxon>lamiids</taxon>
        <taxon>Solanales</taxon>
        <taxon>Solanaceae</taxon>
        <taxon>Nicotianoideae</taxon>
        <taxon>Nicotianeae</taxon>
        <taxon>Nicotiana</taxon>
    </lineage>
</organism>
<accession>O24144</accession>
<protein>
    <recommendedName>
        <fullName>Caffeoyl-CoA O-methyltransferase 1</fullName>
        <ecNumber>2.1.1.104</ecNumber>
    </recommendedName>
    <alternativeName>
        <fullName>Trans-caffeoyl-CoA 3-O-methyltransferase 1</fullName>
        <shortName>CCoAMT-1</shortName>
        <shortName>CCoAOMT-1</shortName>
    </alternativeName>
</protein>
<sequence length="239" mass="26965">MATNGRHQEVGHKSLLQSDALYQYILETSVYPREPEPMKELREITAKHPWNLMTTSADEGQFLSMLIKLINAKNTMEIGVFTGYSLLATAMALPDDGKILAMDINRENYEIGLPVIEKAGLAHKIEFKEGPALPVLDQMIEDGKYHGSYDFIFVDADKDNYLNYHKRLIDLVKIGGLIGYDNTLWNGSVVAPPDAPLRKYVRYYRDFVLELNKALAADSRIEICQLPVGDGITLCRRIS</sequence>
<name>CAMT1_TOBAC</name>
<dbReference type="EC" id="2.1.1.104"/>
<dbReference type="EMBL" id="U38612">
    <property type="protein sequence ID" value="AAC49913.1"/>
    <property type="molecule type" value="mRNA"/>
</dbReference>
<dbReference type="PIR" id="T03783">
    <property type="entry name" value="T03783"/>
</dbReference>
<dbReference type="RefSeq" id="NP_001312329.1">
    <property type="nucleotide sequence ID" value="NM_001325400.1"/>
</dbReference>
<dbReference type="SMR" id="O24144"/>
<dbReference type="STRING" id="4097.O24144"/>
<dbReference type="PaxDb" id="4097-O24144"/>
<dbReference type="GeneID" id="107785450"/>
<dbReference type="KEGG" id="nta:107785450"/>
<dbReference type="OMA" id="ISACHRH"/>
<dbReference type="OrthoDB" id="1213027at2759"/>
<dbReference type="UniPathway" id="UPA00711"/>
<dbReference type="Proteomes" id="UP000084051">
    <property type="component" value="Unplaced"/>
</dbReference>
<dbReference type="GO" id="GO:0042409">
    <property type="term" value="F:caffeoyl-CoA O-methyltransferase activity"/>
    <property type="evidence" value="ECO:0007669"/>
    <property type="project" value="UniProtKB-EC"/>
</dbReference>
<dbReference type="GO" id="GO:0046872">
    <property type="term" value="F:metal ion binding"/>
    <property type="evidence" value="ECO:0007669"/>
    <property type="project" value="UniProtKB-KW"/>
</dbReference>
<dbReference type="GO" id="GO:0008757">
    <property type="term" value="F:S-adenosylmethionine-dependent methyltransferase activity"/>
    <property type="evidence" value="ECO:0000318"/>
    <property type="project" value="GO_Central"/>
</dbReference>
<dbReference type="GO" id="GO:0009809">
    <property type="term" value="P:lignin biosynthetic process"/>
    <property type="evidence" value="ECO:0007669"/>
    <property type="project" value="UniProtKB-KW"/>
</dbReference>
<dbReference type="GO" id="GO:0032259">
    <property type="term" value="P:methylation"/>
    <property type="evidence" value="ECO:0007669"/>
    <property type="project" value="UniProtKB-KW"/>
</dbReference>
<dbReference type="CDD" id="cd02440">
    <property type="entry name" value="AdoMet_MTases"/>
    <property type="match status" value="1"/>
</dbReference>
<dbReference type="FunFam" id="3.40.50.150:FF:000147">
    <property type="entry name" value="Caffeoyl-CoA O-methyltransferase 1"/>
    <property type="match status" value="1"/>
</dbReference>
<dbReference type="Gene3D" id="3.40.50.150">
    <property type="entry name" value="Vaccinia Virus protein VP39"/>
    <property type="match status" value="1"/>
</dbReference>
<dbReference type="InterPro" id="IPR050362">
    <property type="entry name" value="Cation-dep_OMT"/>
</dbReference>
<dbReference type="InterPro" id="IPR029063">
    <property type="entry name" value="SAM-dependent_MTases_sf"/>
</dbReference>
<dbReference type="InterPro" id="IPR002935">
    <property type="entry name" value="SAM_O-MeTrfase"/>
</dbReference>
<dbReference type="PANTHER" id="PTHR10509:SF94">
    <property type="entry name" value="CAFFEOYL-COA O-METHYLTRANSFERASE 3"/>
    <property type="match status" value="1"/>
</dbReference>
<dbReference type="PANTHER" id="PTHR10509">
    <property type="entry name" value="O-METHYLTRANSFERASE-RELATED"/>
    <property type="match status" value="1"/>
</dbReference>
<dbReference type="Pfam" id="PF01596">
    <property type="entry name" value="Methyltransf_3"/>
    <property type="match status" value="1"/>
</dbReference>
<dbReference type="SUPFAM" id="SSF53335">
    <property type="entry name" value="S-adenosyl-L-methionine-dependent methyltransferases"/>
    <property type="match status" value="1"/>
</dbReference>
<dbReference type="PROSITE" id="PS51682">
    <property type="entry name" value="SAM_OMT_I"/>
    <property type="match status" value="1"/>
</dbReference>
<feature type="chain" id="PRO_0000165697" description="Caffeoyl-CoA O-methyltransferase 1">
    <location>
        <begin position="1"/>
        <end position="239"/>
    </location>
</feature>
<feature type="binding site" evidence="1">
    <location>
        <position position="13"/>
    </location>
    <ligand>
        <name>substrate</name>
    </ligand>
</feature>
<feature type="binding site" evidence="2">
    <location>
        <position position="55"/>
    </location>
    <ligand>
        <name>S-adenosyl-L-methionine</name>
        <dbReference type="ChEBI" id="CHEBI:59789"/>
    </ligand>
</feature>
<feature type="binding site" evidence="2">
    <location>
        <position position="77"/>
    </location>
    <ligand>
        <name>S-adenosyl-L-methionine</name>
        <dbReference type="ChEBI" id="CHEBI:59789"/>
    </ligand>
</feature>
<feature type="binding site" evidence="2">
    <location>
        <begin position="79"/>
        <end position="80"/>
    </location>
    <ligand>
        <name>S-adenosyl-L-methionine</name>
        <dbReference type="ChEBI" id="CHEBI:59789"/>
    </ligand>
</feature>
<feature type="binding site" evidence="2">
    <location>
        <position position="85"/>
    </location>
    <ligand>
        <name>S-adenosyl-L-methionine</name>
        <dbReference type="ChEBI" id="CHEBI:59789"/>
    </ligand>
</feature>
<feature type="binding site" evidence="2">
    <location>
        <position position="103"/>
    </location>
    <ligand>
        <name>S-adenosyl-L-methionine</name>
        <dbReference type="ChEBI" id="CHEBI:59789"/>
    </ligand>
</feature>
<feature type="binding site" evidence="2">
    <location>
        <position position="132"/>
    </location>
    <ligand>
        <name>S-adenosyl-L-methionine</name>
        <dbReference type="ChEBI" id="CHEBI:59789"/>
    </ligand>
</feature>
<feature type="binding site" evidence="2">
    <location>
        <position position="155"/>
    </location>
    <ligand>
        <name>a divalent metal cation</name>
        <dbReference type="ChEBI" id="CHEBI:60240"/>
    </ligand>
</feature>
<feature type="binding site" evidence="1">
    <location>
        <position position="155"/>
    </location>
    <ligand>
        <name>substrate</name>
    </ligand>
</feature>
<feature type="binding site" evidence="2">
    <location>
        <position position="157"/>
    </location>
    <ligand>
        <name>S-adenosyl-L-methionine</name>
        <dbReference type="ChEBI" id="CHEBI:59789"/>
    </ligand>
</feature>
<feature type="binding site" evidence="2">
    <location>
        <position position="181"/>
    </location>
    <ligand>
        <name>a divalent metal cation</name>
        <dbReference type="ChEBI" id="CHEBI:60240"/>
    </ligand>
</feature>
<feature type="binding site" evidence="2">
    <location>
        <position position="182"/>
    </location>
    <ligand>
        <name>a divalent metal cation</name>
        <dbReference type="ChEBI" id="CHEBI:60240"/>
    </ligand>
</feature>
<feature type="binding site" evidence="1">
    <location>
        <position position="186"/>
    </location>
    <ligand>
        <name>substrate</name>
    </ligand>
</feature>
<feature type="mutagenesis site" description="Total loss of activity." evidence="4">
    <location>
        <begin position="1"/>
        <end position="16"/>
    </location>
</feature>
<feature type="mutagenesis site" description="No effect on activity." evidence="4">
    <original>E</original>
    <variation>Q</variation>
    <location>
        <position position="40"/>
    </location>
</feature>
<feature type="mutagenesis site" description="No effect on activity." evidence="4">
    <original>E</original>
    <variation>S</variation>
    <location>
        <position position="43"/>
    </location>
</feature>
<feature type="mutagenesis site" description="No effect on activity." evidence="4">
    <original>K</original>
    <variation>A</variation>
    <location>
        <position position="47"/>
    </location>
</feature>
<feature type="mutagenesis site" description="Decrease of activity." evidence="4">
    <original>D</original>
    <variation>A</variation>
    <location>
        <position position="58"/>
    </location>
</feature>
<feature type="mutagenesis site" description="Decrease of activity." evidence="4">
    <original>Q</original>
    <variation>S</variation>
    <location>
        <position position="61"/>
    </location>
</feature>
<feature type="mutagenesis site" description="Total loss of activity." evidence="4">
    <location>
        <begin position="186"/>
        <end position="191"/>
    </location>
</feature>
<feature type="mutagenesis site" description="No effect on activity; when associated with T-202." evidence="4">
    <original>RK</original>
    <variation>TT</variation>
    <location>
        <begin position="198"/>
        <end position="199"/>
    </location>
</feature>
<feature type="mutagenesis site" description="No effect on activity; when associated with 198-TT-199." evidence="4">
    <original>R</original>
    <variation>T</variation>
    <location>
        <position position="202"/>
    </location>
</feature>
<feature type="mutagenesis site" description="Total loss of activity." evidence="4">
    <original>R</original>
    <variation>T</variation>
    <location>
        <position position="220"/>
    </location>
</feature>
<evidence type="ECO:0000250" key="1">
    <source>
        <dbReference type="UniProtKB" id="Q40313"/>
    </source>
</evidence>
<evidence type="ECO:0000255" key="2">
    <source>
        <dbReference type="PROSITE-ProRule" id="PRU01019"/>
    </source>
</evidence>
<evidence type="ECO:0000269" key="3">
    <source>
    </source>
</evidence>
<evidence type="ECO:0000269" key="4">
    <source>
    </source>
</evidence>
<gene>
    <name type="primary">CCOAOMT1</name>
</gene>
<comment type="function">
    <text>Methylates caffeoyl-CoA to feruloyl-CoA and 5-hydroxyferuloyl-CoA to sinapoyl-CoA. Plays a role in the synthesis of feruloylated polysaccharides. Involved in the reinforcement of the plant cell wall. Also involved in the responding to wounding or pathogen challenge by the increased formation of cell wall-bound ferulic acid polymers.</text>
</comment>
<comment type="catalytic activity">
    <reaction>
        <text>(E)-caffeoyl-CoA + S-adenosyl-L-methionine = (E)-feruloyl-CoA + S-adenosyl-L-homocysteine + H(+)</text>
        <dbReference type="Rhea" id="RHEA:16925"/>
        <dbReference type="ChEBI" id="CHEBI:15378"/>
        <dbReference type="ChEBI" id="CHEBI:57856"/>
        <dbReference type="ChEBI" id="CHEBI:59789"/>
        <dbReference type="ChEBI" id="CHEBI:87136"/>
        <dbReference type="ChEBI" id="CHEBI:87305"/>
        <dbReference type="EC" id="2.1.1.104"/>
    </reaction>
</comment>
<comment type="cofactor">
    <cofactor>
        <name>Mg(2+)</name>
        <dbReference type="ChEBI" id="CHEBI:18420"/>
    </cofactor>
    <text>Binds 1 Mg(2+) ion per subunit.</text>
</comment>
<comment type="pathway">
    <text>Aromatic compound metabolism; phenylpropanoid biosynthesis.</text>
</comment>
<comment type="subunit">
    <text>Monomer.</text>
</comment>
<comment type="tissue specificity">
    <text evidence="3">Mostly expressed in the bottom and middle parts of the stems.</text>
</comment>
<comment type="induction">
    <text evidence="3">By wounding and viral infection.</text>
</comment>
<comment type="miscellaneous">
    <text>CoA moiety is essential to enzymatic activity since free caffeic acid is not a substrate for the enzyme. The N-terminal amino acid sequence of the protein seems to have a particular role in the enzyme-caffeoyl-CoA interaction.</text>
</comment>
<comment type="similarity">
    <text evidence="2">Belongs to the class I-like SAM-binding methyltransferase superfamily. Cation-dependent O-methyltransferase family. CCoAMT subfamily.</text>
</comment>
<reference key="1">
    <citation type="journal article" date="1998" name="Plant Mol. Biol.">
        <title>cDNA cloning, substrate specificity and expression study of tobacco caffeoyl-CoA 3-O-methyltransferase, a lignin biosynthetic enzyme.</title>
        <authorList>
            <person name="Martz F."/>
            <person name="Maury S."/>
            <person name="Pincon G."/>
            <person name="Legrand M."/>
        </authorList>
    </citation>
    <scope>NUCLEOTIDE SEQUENCE [MRNA]</scope>
    <source>
        <strain>cv. Samsun NN</strain>
    </source>
</reference>
<reference key="2">
    <citation type="journal article" date="2001" name="J. Biol. Chem.">
        <title>Identification of the enzymatic active site of tobacco caffeoyl-coenzyme A O-methyltransferase by site-directed mutagenesis.</title>
        <authorList>
            <person name="Hoffmann L."/>
            <person name="Maury S."/>
            <person name="Bergdoll M."/>
            <person name="Thion L."/>
            <person name="Erard M."/>
            <person name="Legrand M."/>
        </authorList>
    </citation>
    <scope>MUTAGENESIS OF 1-MET--LEU-16; GLU-40; GLU-43; LYS-47; ASP-58; GLN-61; 186-ASN--ALA-191; 198-ARG-LYS-199; ARG-202 AND ARG-220</scope>
</reference>
<reference key="3">
    <citation type="journal article" date="1999" name="Plant Physiol.">
        <title>Tobacco O-methyltransferases involved in phenylpropanoid metabolism. The different caffeoyl-coenzyme A/5-hydroxyferuloyl-coenzyme A 3/5-O-methyltransferase and caffeic acid/5-hydroxyferulic acid 3/5-O-methyltransferase classes have distinct substrate specificities and expression patterns.</title>
        <authorList>
            <person name="Maury S."/>
            <person name="Geoffroy P."/>
            <person name="Legrand M."/>
        </authorList>
    </citation>
    <scope>TISSUE SPECIFICITY</scope>
    <scope>SUBSTRATE SPECIFICITY</scope>
    <scope>INDUCTION</scope>
</reference>